<proteinExistence type="inferred from homology"/>
<accession>Q5F5S3</accession>
<feature type="chain" id="PRO_0000225220" description="Elongation factor G">
    <location>
        <begin position="1"/>
        <end position="701"/>
    </location>
</feature>
<feature type="domain" description="tr-type G">
    <location>
        <begin position="8"/>
        <end position="290"/>
    </location>
</feature>
<feature type="binding site" evidence="1">
    <location>
        <begin position="17"/>
        <end position="24"/>
    </location>
    <ligand>
        <name>GTP</name>
        <dbReference type="ChEBI" id="CHEBI:37565"/>
    </ligand>
</feature>
<feature type="binding site" evidence="1">
    <location>
        <begin position="88"/>
        <end position="92"/>
    </location>
    <ligand>
        <name>GTP</name>
        <dbReference type="ChEBI" id="CHEBI:37565"/>
    </ligand>
</feature>
<feature type="binding site" evidence="1">
    <location>
        <begin position="142"/>
        <end position="145"/>
    </location>
    <ligand>
        <name>GTP</name>
        <dbReference type="ChEBI" id="CHEBI:37565"/>
    </ligand>
</feature>
<protein>
    <recommendedName>
        <fullName evidence="1">Elongation factor G</fullName>
        <shortName evidence="1">EF-G</shortName>
    </recommendedName>
</protein>
<reference key="1">
    <citation type="submission" date="2003-03" db="EMBL/GenBank/DDBJ databases">
        <title>The complete genome sequence of Neisseria gonorrhoeae.</title>
        <authorList>
            <person name="Lewis L.A."/>
            <person name="Gillaspy A.F."/>
            <person name="McLaughlin R.E."/>
            <person name="Gipson M."/>
            <person name="Ducey T.F."/>
            <person name="Ownbey T."/>
            <person name="Hartman K."/>
            <person name="Nydick C."/>
            <person name="Carson M.B."/>
            <person name="Vaughn J."/>
            <person name="Thomson C."/>
            <person name="Song L."/>
            <person name="Lin S."/>
            <person name="Yuan X."/>
            <person name="Najar F."/>
            <person name="Zhan M."/>
            <person name="Ren Q."/>
            <person name="Zhu H."/>
            <person name="Qi S."/>
            <person name="Kenton S.M."/>
            <person name="Lai H."/>
            <person name="White J.D."/>
            <person name="Clifton S."/>
            <person name="Roe B.A."/>
            <person name="Dyer D.W."/>
        </authorList>
    </citation>
    <scope>NUCLEOTIDE SEQUENCE [LARGE SCALE GENOMIC DNA]</scope>
    <source>
        <strain>ATCC 700825 / FA 1090</strain>
    </source>
</reference>
<sequence length="701" mass="77173">MARKTPISLYRNIGISAHIDAGKTTTTERILFYTGLTHKLGEVHDGAATTDYMEQEQERGITITSAAVTSYWSGMAKQFPEHRFNIIDTPGHVDFTVEVERSMRVLDGAVMVYCAVGGVQPQSETVWRQANKYQVPRLAFVNKMDRQGANFFRVVEQMKTRLRANPVPIVIPVGAEDSFTGVVDLLKMKSIIWNEADKGTTFTYGDIPAELVETAEEWRQNMIEAAAEASEELMDKYLGGEDLAEEEIVGALRQRTLAGEIQPMLCGSAFKNKGVQRMLDAVVELLPAPTDIPPVQGVNPNTEEADSRQASDEEKFSALAFKMLNDKYVGQLTFIRVYSGVVKSGDTVLNSVKGTRERIGRLVQMTAADRTEIEEVRAGDIAAAIGLKDVTTGETLCAESAPIILERMEFPEPVIHIAVEPKTKADQEKMGIALNRLAKEDPSFRVRTDEESGQTIISGMGELHLEIIVDRMKREFGVEANIGAPQVAYRETIRKAVKAEYKHAKQSGGKGQYGHVVIEMEPMEPGGEGYEFIDEIKGGVIPREFIPSVDKGIRDTLPNGIVAGYPVVDVRIRLVFGSYHDVDSSQLAFELAASQAFKEGMRQASPALLEPIMAVEVETPEEYMGDVMGDLNRRRGVVLGMDDDGIGGKKVRAEVPLAEMFGYSTDLRSATQGRATYSMEFKKYSEAPAHIAAAVTEARKG</sequence>
<gene>
    <name evidence="1" type="primary">fusA</name>
    <name type="ordered locus">NGO_1843</name>
</gene>
<organism>
    <name type="scientific">Neisseria gonorrhoeae (strain ATCC 700825 / FA 1090)</name>
    <dbReference type="NCBI Taxonomy" id="242231"/>
    <lineage>
        <taxon>Bacteria</taxon>
        <taxon>Pseudomonadati</taxon>
        <taxon>Pseudomonadota</taxon>
        <taxon>Betaproteobacteria</taxon>
        <taxon>Neisseriales</taxon>
        <taxon>Neisseriaceae</taxon>
        <taxon>Neisseria</taxon>
    </lineage>
</organism>
<evidence type="ECO:0000255" key="1">
    <source>
        <dbReference type="HAMAP-Rule" id="MF_00054"/>
    </source>
</evidence>
<name>EFG_NEIG1</name>
<comment type="function">
    <text evidence="1">Catalyzes the GTP-dependent ribosomal translocation step during translation elongation. During this step, the ribosome changes from the pre-translocational (PRE) to the post-translocational (POST) state as the newly formed A-site-bound peptidyl-tRNA and P-site-bound deacylated tRNA move to the P and E sites, respectively. Catalyzes the coordinated movement of the two tRNA molecules, the mRNA and conformational changes in the ribosome.</text>
</comment>
<comment type="subcellular location">
    <subcellularLocation>
        <location evidence="1">Cytoplasm</location>
    </subcellularLocation>
</comment>
<comment type="similarity">
    <text evidence="1">Belongs to the TRAFAC class translation factor GTPase superfamily. Classic translation factor GTPase family. EF-G/EF-2 subfamily.</text>
</comment>
<keyword id="KW-0963">Cytoplasm</keyword>
<keyword id="KW-0251">Elongation factor</keyword>
<keyword id="KW-0342">GTP-binding</keyword>
<keyword id="KW-0547">Nucleotide-binding</keyword>
<keyword id="KW-0648">Protein biosynthesis</keyword>
<keyword id="KW-1185">Reference proteome</keyword>
<dbReference type="EMBL" id="AE004969">
    <property type="protein sequence ID" value="AAW90464.1"/>
    <property type="molecule type" value="Genomic_DNA"/>
</dbReference>
<dbReference type="RefSeq" id="WP_003690097.1">
    <property type="nucleotide sequence ID" value="NC_002946.2"/>
</dbReference>
<dbReference type="RefSeq" id="YP_208876.1">
    <property type="nucleotide sequence ID" value="NC_002946.2"/>
</dbReference>
<dbReference type="SMR" id="Q5F5S3"/>
<dbReference type="STRING" id="242231.NGO_1843"/>
<dbReference type="GeneID" id="66754290"/>
<dbReference type="KEGG" id="ngo:NGO_1843"/>
<dbReference type="PATRIC" id="fig|242231.10.peg.2215"/>
<dbReference type="HOGENOM" id="CLU_002794_4_1_4"/>
<dbReference type="Proteomes" id="UP000000535">
    <property type="component" value="Chromosome"/>
</dbReference>
<dbReference type="GO" id="GO:0005737">
    <property type="term" value="C:cytoplasm"/>
    <property type="evidence" value="ECO:0007669"/>
    <property type="project" value="UniProtKB-SubCell"/>
</dbReference>
<dbReference type="GO" id="GO:0005525">
    <property type="term" value="F:GTP binding"/>
    <property type="evidence" value="ECO:0007669"/>
    <property type="project" value="UniProtKB-UniRule"/>
</dbReference>
<dbReference type="GO" id="GO:0003924">
    <property type="term" value="F:GTPase activity"/>
    <property type="evidence" value="ECO:0007669"/>
    <property type="project" value="InterPro"/>
</dbReference>
<dbReference type="GO" id="GO:0097216">
    <property type="term" value="F:guanosine tetraphosphate binding"/>
    <property type="evidence" value="ECO:0007669"/>
    <property type="project" value="UniProtKB-ARBA"/>
</dbReference>
<dbReference type="GO" id="GO:0003746">
    <property type="term" value="F:translation elongation factor activity"/>
    <property type="evidence" value="ECO:0007669"/>
    <property type="project" value="UniProtKB-UniRule"/>
</dbReference>
<dbReference type="GO" id="GO:0032790">
    <property type="term" value="P:ribosome disassembly"/>
    <property type="evidence" value="ECO:0007669"/>
    <property type="project" value="TreeGrafter"/>
</dbReference>
<dbReference type="CDD" id="cd01886">
    <property type="entry name" value="EF-G"/>
    <property type="match status" value="1"/>
</dbReference>
<dbReference type="CDD" id="cd16262">
    <property type="entry name" value="EFG_III"/>
    <property type="match status" value="1"/>
</dbReference>
<dbReference type="CDD" id="cd01434">
    <property type="entry name" value="EFG_mtEFG1_IV"/>
    <property type="match status" value="1"/>
</dbReference>
<dbReference type="CDD" id="cd03713">
    <property type="entry name" value="EFG_mtEFG_C"/>
    <property type="match status" value="1"/>
</dbReference>
<dbReference type="CDD" id="cd04088">
    <property type="entry name" value="EFG_mtEFG_II"/>
    <property type="match status" value="1"/>
</dbReference>
<dbReference type="FunFam" id="2.40.30.10:FF:000006">
    <property type="entry name" value="Elongation factor G"/>
    <property type="match status" value="1"/>
</dbReference>
<dbReference type="FunFam" id="3.30.230.10:FF:000003">
    <property type="entry name" value="Elongation factor G"/>
    <property type="match status" value="1"/>
</dbReference>
<dbReference type="FunFam" id="3.30.70.240:FF:000001">
    <property type="entry name" value="Elongation factor G"/>
    <property type="match status" value="1"/>
</dbReference>
<dbReference type="FunFam" id="3.30.70.870:FF:000001">
    <property type="entry name" value="Elongation factor G"/>
    <property type="match status" value="1"/>
</dbReference>
<dbReference type="FunFam" id="3.40.50.300:FF:000029">
    <property type="entry name" value="Elongation factor G"/>
    <property type="match status" value="1"/>
</dbReference>
<dbReference type="Gene3D" id="3.30.230.10">
    <property type="match status" value="1"/>
</dbReference>
<dbReference type="Gene3D" id="3.30.70.240">
    <property type="match status" value="1"/>
</dbReference>
<dbReference type="Gene3D" id="3.30.70.870">
    <property type="entry name" value="Elongation Factor G (Translational Gtpase), domain 3"/>
    <property type="match status" value="1"/>
</dbReference>
<dbReference type="Gene3D" id="3.40.50.300">
    <property type="entry name" value="P-loop containing nucleotide triphosphate hydrolases"/>
    <property type="match status" value="1"/>
</dbReference>
<dbReference type="Gene3D" id="2.40.30.10">
    <property type="entry name" value="Translation factors"/>
    <property type="match status" value="1"/>
</dbReference>
<dbReference type="HAMAP" id="MF_00054_B">
    <property type="entry name" value="EF_G_EF_2_B"/>
    <property type="match status" value="1"/>
</dbReference>
<dbReference type="InterPro" id="IPR041095">
    <property type="entry name" value="EFG_II"/>
</dbReference>
<dbReference type="InterPro" id="IPR009022">
    <property type="entry name" value="EFG_III"/>
</dbReference>
<dbReference type="InterPro" id="IPR035647">
    <property type="entry name" value="EFG_III/V"/>
</dbReference>
<dbReference type="InterPro" id="IPR047872">
    <property type="entry name" value="EFG_IV"/>
</dbReference>
<dbReference type="InterPro" id="IPR035649">
    <property type="entry name" value="EFG_V"/>
</dbReference>
<dbReference type="InterPro" id="IPR000640">
    <property type="entry name" value="EFG_V-like"/>
</dbReference>
<dbReference type="InterPro" id="IPR004161">
    <property type="entry name" value="EFTu-like_2"/>
</dbReference>
<dbReference type="InterPro" id="IPR031157">
    <property type="entry name" value="G_TR_CS"/>
</dbReference>
<dbReference type="InterPro" id="IPR027417">
    <property type="entry name" value="P-loop_NTPase"/>
</dbReference>
<dbReference type="InterPro" id="IPR020568">
    <property type="entry name" value="Ribosomal_Su5_D2-typ_SF"/>
</dbReference>
<dbReference type="InterPro" id="IPR014721">
    <property type="entry name" value="Ribsml_uS5_D2-typ_fold_subgr"/>
</dbReference>
<dbReference type="InterPro" id="IPR005225">
    <property type="entry name" value="Small_GTP-bd"/>
</dbReference>
<dbReference type="InterPro" id="IPR000795">
    <property type="entry name" value="T_Tr_GTP-bd_dom"/>
</dbReference>
<dbReference type="InterPro" id="IPR009000">
    <property type="entry name" value="Transl_B-barrel_sf"/>
</dbReference>
<dbReference type="InterPro" id="IPR004540">
    <property type="entry name" value="Transl_elong_EFG/EF2"/>
</dbReference>
<dbReference type="InterPro" id="IPR005517">
    <property type="entry name" value="Transl_elong_EFG/EF2_IV"/>
</dbReference>
<dbReference type="NCBIfam" id="TIGR00484">
    <property type="entry name" value="EF-G"/>
    <property type="match status" value="1"/>
</dbReference>
<dbReference type="NCBIfam" id="NF009381">
    <property type="entry name" value="PRK12740.1-5"/>
    <property type="match status" value="1"/>
</dbReference>
<dbReference type="NCBIfam" id="TIGR00231">
    <property type="entry name" value="small_GTP"/>
    <property type="match status" value="1"/>
</dbReference>
<dbReference type="PANTHER" id="PTHR43261:SF1">
    <property type="entry name" value="RIBOSOME-RELEASING FACTOR 2, MITOCHONDRIAL"/>
    <property type="match status" value="1"/>
</dbReference>
<dbReference type="PANTHER" id="PTHR43261">
    <property type="entry name" value="TRANSLATION ELONGATION FACTOR G-RELATED"/>
    <property type="match status" value="1"/>
</dbReference>
<dbReference type="Pfam" id="PF00679">
    <property type="entry name" value="EFG_C"/>
    <property type="match status" value="1"/>
</dbReference>
<dbReference type="Pfam" id="PF14492">
    <property type="entry name" value="EFG_III"/>
    <property type="match status" value="1"/>
</dbReference>
<dbReference type="Pfam" id="PF03764">
    <property type="entry name" value="EFG_IV"/>
    <property type="match status" value="1"/>
</dbReference>
<dbReference type="Pfam" id="PF00009">
    <property type="entry name" value="GTP_EFTU"/>
    <property type="match status" value="1"/>
</dbReference>
<dbReference type="Pfam" id="PF03144">
    <property type="entry name" value="GTP_EFTU_D2"/>
    <property type="match status" value="1"/>
</dbReference>
<dbReference type="PRINTS" id="PR00315">
    <property type="entry name" value="ELONGATNFCT"/>
</dbReference>
<dbReference type="SMART" id="SM00838">
    <property type="entry name" value="EFG_C"/>
    <property type="match status" value="1"/>
</dbReference>
<dbReference type="SMART" id="SM00889">
    <property type="entry name" value="EFG_IV"/>
    <property type="match status" value="1"/>
</dbReference>
<dbReference type="SUPFAM" id="SSF54980">
    <property type="entry name" value="EF-G C-terminal domain-like"/>
    <property type="match status" value="2"/>
</dbReference>
<dbReference type="SUPFAM" id="SSF52540">
    <property type="entry name" value="P-loop containing nucleoside triphosphate hydrolases"/>
    <property type="match status" value="1"/>
</dbReference>
<dbReference type="SUPFAM" id="SSF54211">
    <property type="entry name" value="Ribosomal protein S5 domain 2-like"/>
    <property type="match status" value="1"/>
</dbReference>
<dbReference type="SUPFAM" id="SSF50447">
    <property type="entry name" value="Translation proteins"/>
    <property type="match status" value="1"/>
</dbReference>
<dbReference type="PROSITE" id="PS00301">
    <property type="entry name" value="G_TR_1"/>
    <property type="match status" value="1"/>
</dbReference>
<dbReference type="PROSITE" id="PS51722">
    <property type="entry name" value="G_TR_2"/>
    <property type="match status" value="1"/>
</dbReference>